<gene>
    <name evidence="1" type="primary">hslU</name>
    <name type="ordered locus">BCc_377</name>
</gene>
<proteinExistence type="inferred from homology"/>
<name>HSLU_BUCCC</name>
<evidence type="ECO:0000255" key="1">
    <source>
        <dbReference type="HAMAP-Rule" id="MF_00249"/>
    </source>
</evidence>
<keyword id="KW-0067">ATP-binding</keyword>
<keyword id="KW-0143">Chaperone</keyword>
<keyword id="KW-0963">Cytoplasm</keyword>
<keyword id="KW-0547">Nucleotide-binding</keyword>
<keyword id="KW-1185">Reference proteome</keyword>
<organism>
    <name type="scientific">Buchnera aphidicola subsp. Cinara cedri (strain Cc)</name>
    <dbReference type="NCBI Taxonomy" id="372461"/>
    <lineage>
        <taxon>Bacteria</taxon>
        <taxon>Pseudomonadati</taxon>
        <taxon>Pseudomonadota</taxon>
        <taxon>Gammaproteobacteria</taxon>
        <taxon>Enterobacterales</taxon>
        <taxon>Erwiniaceae</taxon>
        <taxon>Buchnera</taxon>
    </lineage>
</organism>
<dbReference type="EMBL" id="CP000263">
    <property type="protein sequence ID" value="ABJ90827.1"/>
    <property type="molecule type" value="Genomic_DNA"/>
</dbReference>
<dbReference type="RefSeq" id="WP_011672746.1">
    <property type="nucleotide sequence ID" value="NC_008513.1"/>
</dbReference>
<dbReference type="SMR" id="Q056X2"/>
<dbReference type="STRING" id="372461.BCc_377"/>
<dbReference type="KEGG" id="bcc:BCc_377"/>
<dbReference type="eggNOG" id="COG1220">
    <property type="taxonomic scope" value="Bacteria"/>
</dbReference>
<dbReference type="HOGENOM" id="CLU_033123_0_0_6"/>
<dbReference type="OrthoDB" id="9804062at2"/>
<dbReference type="Proteomes" id="UP000000669">
    <property type="component" value="Chromosome"/>
</dbReference>
<dbReference type="GO" id="GO:0009376">
    <property type="term" value="C:HslUV protease complex"/>
    <property type="evidence" value="ECO:0007669"/>
    <property type="project" value="UniProtKB-UniRule"/>
</dbReference>
<dbReference type="GO" id="GO:0005524">
    <property type="term" value="F:ATP binding"/>
    <property type="evidence" value="ECO:0007669"/>
    <property type="project" value="UniProtKB-UniRule"/>
</dbReference>
<dbReference type="GO" id="GO:0016887">
    <property type="term" value="F:ATP hydrolysis activity"/>
    <property type="evidence" value="ECO:0007669"/>
    <property type="project" value="InterPro"/>
</dbReference>
<dbReference type="GO" id="GO:0008233">
    <property type="term" value="F:peptidase activity"/>
    <property type="evidence" value="ECO:0007669"/>
    <property type="project" value="InterPro"/>
</dbReference>
<dbReference type="GO" id="GO:0036402">
    <property type="term" value="F:proteasome-activating activity"/>
    <property type="evidence" value="ECO:0007669"/>
    <property type="project" value="UniProtKB-UniRule"/>
</dbReference>
<dbReference type="GO" id="GO:0043335">
    <property type="term" value="P:protein unfolding"/>
    <property type="evidence" value="ECO:0007669"/>
    <property type="project" value="UniProtKB-UniRule"/>
</dbReference>
<dbReference type="GO" id="GO:0051603">
    <property type="term" value="P:proteolysis involved in protein catabolic process"/>
    <property type="evidence" value="ECO:0007669"/>
    <property type="project" value="TreeGrafter"/>
</dbReference>
<dbReference type="CDD" id="cd19498">
    <property type="entry name" value="RecA-like_HslU"/>
    <property type="match status" value="1"/>
</dbReference>
<dbReference type="FunFam" id="1.10.8.10:FF:000028">
    <property type="entry name" value="ATP-dependent protease ATPase subunit HslU"/>
    <property type="match status" value="1"/>
</dbReference>
<dbReference type="FunFam" id="3.40.50.300:FF:000213">
    <property type="entry name" value="ATP-dependent protease ATPase subunit HslU"/>
    <property type="match status" value="1"/>
</dbReference>
<dbReference type="FunFam" id="3.40.50.300:FF:000220">
    <property type="entry name" value="ATP-dependent protease ATPase subunit HslU"/>
    <property type="match status" value="1"/>
</dbReference>
<dbReference type="Gene3D" id="1.10.8.60">
    <property type="match status" value="1"/>
</dbReference>
<dbReference type="Gene3D" id="3.40.50.300">
    <property type="entry name" value="P-loop containing nucleotide triphosphate hydrolases"/>
    <property type="match status" value="2"/>
</dbReference>
<dbReference type="HAMAP" id="MF_00249">
    <property type="entry name" value="HslU"/>
    <property type="match status" value="1"/>
</dbReference>
<dbReference type="InterPro" id="IPR003593">
    <property type="entry name" value="AAA+_ATPase"/>
</dbReference>
<dbReference type="InterPro" id="IPR050052">
    <property type="entry name" value="ATP-dep_Clp_protease_ClpX"/>
</dbReference>
<dbReference type="InterPro" id="IPR003959">
    <property type="entry name" value="ATPase_AAA_core"/>
</dbReference>
<dbReference type="InterPro" id="IPR019489">
    <property type="entry name" value="Clp_ATPase_C"/>
</dbReference>
<dbReference type="InterPro" id="IPR004491">
    <property type="entry name" value="HslU"/>
</dbReference>
<dbReference type="InterPro" id="IPR027417">
    <property type="entry name" value="P-loop_NTPase"/>
</dbReference>
<dbReference type="NCBIfam" id="TIGR00390">
    <property type="entry name" value="hslU"/>
    <property type="match status" value="1"/>
</dbReference>
<dbReference type="NCBIfam" id="NF003544">
    <property type="entry name" value="PRK05201.1"/>
    <property type="match status" value="1"/>
</dbReference>
<dbReference type="PANTHER" id="PTHR48102">
    <property type="entry name" value="ATP-DEPENDENT CLP PROTEASE ATP-BINDING SUBUNIT CLPX-LIKE, MITOCHONDRIAL-RELATED"/>
    <property type="match status" value="1"/>
</dbReference>
<dbReference type="PANTHER" id="PTHR48102:SF3">
    <property type="entry name" value="ATP-DEPENDENT PROTEASE ATPASE SUBUNIT HSLU"/>
    <property type="match status" value="1"/>
</dbReference>
<dbReference type="Pfam" id="PF00004">
    <property type="entry name" value="AAA"/>
    <property type="match status" value="1"/>
</dbReference>
<dbReference type="Pfam" id="PF07724">
    <property type="entry name" value="AAA_2"/>
    <property type="match status" value="1"/>
</dbReference>
<dbReference type="SMART" id="SM00382">
    <property type="entry name" value="AAA"/>
    <property type="match status" value="1"/>
</dbReference>
<dbReference type="SMART" id="SM01086">
    <property type="entry name" value="ClpB_D2-small"/>
    <property type="match status" value="1"/>
</dbReference>
<dbReference type="SUPFAM" id="SSF52540">
    <property type="entry name" value="P-loop containing nucleoside triphosphate hydrolases"/>
    <property type="match status" value="1"/>
</dbReference>
<feature type="chain" id="PRO_1000012710" description="ATP-dependent protease ATPase subunit HslU">
    <location>
        <begin position="1"/>
        <end position="444"/>
    </location>
</feature>
<feature type="binding site" evidence="1">
    <location>
        <position position="18"/>
    </location>
    <ligand>
        <name>ATP</name>
        <dbReference type="ChEBI" id="CHEBI:30616"/>
    </ligand>
</feature>
<feature type="binding site" evidence="1">
    <location>
        <begin position="60"/>
        <end position="65"/>
    </location>
    <ligand>
        <name>ATP</name>
        <dbReference type="ChEBI" id="CHEBI:30616"/>
    </ligand>
</feature>
<feature type="binding site" evidence="1">
    <location>
        <position position="256"/>
    </location>
    <ligand>
        <name>ATP</name>
        <dbReference type="ChEBI" id="CHEBI:30616"/>
    </ligand>
</feature>
<feature type="binding site" evidence="1">
    <location>
        <position position="322"/>
    </location>
    <ligand>
        <name>ATP</name>
        <dbReference type="ChEBI" id="CHEBI:30616"/>
    </ligand>
</feature>
<feature type="binding site" evidence="1">
    <location>
        <position position="394"/>
    </location>
    <ligand>
        <name>ATP</name>
        <dbReference type="ChEBI" id="CHEBI:30616"/>
    </ligand>
</feature>
<reference key="1">
    <citation type="journal article" date="2006" name="Science">
        <title>A small microbial genome: the end of a long symbiotic relationship?</title>
        <authorList>
            <person name="Perez-Brocal V."/>
            <person name="Gil R."/>
            <person name="Ramos S."/>
            <person name="Lamelas A."/>
            <person name="Postigo M."/>
            <person name="Michelena J.M."/>
            <person name="Silva F.J."/>
            <person name="Moya A."/>
            <person name="Latorre A."/>
        </authorList>
    </citation>
    <scope>NUCLEOTIDE SEQUENCE [LARGE SCALE GENOMIC DNA]</scope>
    <source>
        <strain>Cc</strain>
    </source>
</reference>
<accession>Q056X2</accession>
<comment type="function">
    <text evidence="1">ATPase subunit of a proteasome-like degradation complex; this subunit has chaperone activity. The binding of ATP and its subsequent hydrolysis by HslU are essential for unfolding of protein substrates subsequently hydrolyzed by HslV. HslU recognizes the N-terminal part of its protein substrates and unfolds these before they are guided to HslV for hydrolysis.</text>
</comment>
<comment type="subunit">
    <text evidence="1">A double ring-shaped homohexamer of HslV is capped on each side by a ring-shaped HslU homohexamer. The assembly of the HslU/HslV complex is dependent on binding of ATP.</text>
</comment>
<comment type="subcellular location">
    <subcellularLocation>
        <location evidence="1">Cytoplasm</location>
    </subcellularLocation>
</comment>
<comment type="similarity">
    <text evidence="1">Belongs to the ClpX chaperone family. HslU subfamily.</text>
</comment>
<sequence length="444" mass="50729">MSEMTPRKIVKELNKYIIGQNNAKRAVAIALRNRWRRMQLNSELRNEITPKNILMIGPTGVGKTEIARRLAKLANAPFIKVEATKFTEVGYVGKEVDSIIRDLTDLAIKMIRLQIIKKNKKHAKKRAEERILKILIPVPKDNWNEENLKEKPEKTIQIFRKKLQEGKLDNKEIEIQIAATPIGIEIMSPPGMEELTNQLQSLFQNLSGKKKNLRKLKIKDAMKIIIEEEAAKLINLEELKEKAIYSVEQNSIVFIDEIDKICKHHSSASNSDVSREGVQRDLLPLIEGCTVSTKHGSVKTDHILFIASGAFQTSTPSDLIPELQGRLPIRVELNALTVDDFERILTEPNASITTQYKALIKTEGVDIIFTKKGIRKIAEASWKINESMENIGARRLYTVLEKLMEDISFNSNEKFGQKIYIDEKYVNLHLDKLIENEDLSRFIL</sequence>
<protein>
    <recommendedName>
        <fullName evidence="1">ATP-dependent protease ATPase subunit HslU</fullName>
    </recommendedName>
    <alternativeName>
        <fullName evidence="1">Unfoldase HslU</fullName>
    </alternativeName>
</protein>